<organism>
    <name type="scientific">Shewanella frigidimarina (strain NCIMB 400)</name>
    <dbReference type="NCBI Taxonomy" id="318167"/>
    <lineage>
        <taxon>Bacteria</taxon>
        <taxon>Pseudomonadati</taxon>
        <taxon>Pseudomonadota</taxon>
        <taxon>Gammaproteobacteria</taxon>
        <taxon>Alteromonadales</taxon>
        <taxon>Shewanellaceae</taxon>
        <taxon>Shewanella</taxon>
    </lineage>
</organism>
<reference key="1">
    <citation type="submission" date="2006-08" db="EMBL/GenBank/DDBJ databases">
        <title>Complete sequence of Shewanella frigidimarina NCIMB 400.</title>
        <authorList>
            <consortium name="US DOE Joint Genome Institute"/>
            <person name="Copeland A."/>
            <person name="Lucas S."/>
            <person name="Lapidus A."/>
            <person name="Barry K."/>
            <person name="Detter J.C."/>
            <person name="Glavina del Rio T."/>
            <person name="Hammon N."/>
            <person name="Israni S."/>
            <person name="Dalin E."/>
            <person name="Tice H."/>
            <person name="Pitluck S."/>
            <person name="Fredrickson J.K."/>
            <person name="Kolker E."/>
            <person name="McCuel L.A."/>
            <person name="DiChristina T."/>
            <person name="Nealson K.H."/>
            <person name="Newman D."/>
            <person name="Tiedje J.M."/>
            <person name="Zhou J."/>
            <person name="Romine M.F."/>
            <person name="Culley D.E."/>
            <person name="Serres M."/>
            <person name="Chertkov O."/>
            <person name="Brettin T."/>
            <person name="Bruce D."/>
            <person name="Han C."/>
            <person name="Tapia R."/>
            <person name="Gilna P."/>
            <person name="Schmutz J."/>
            <person name="Larimer F."/>
            <person name="Land M."/>
            <person name="Hauser L."/>
            <person name="Kyrpides N."/>
            <person name="Mikhailova N."/>
            <person name="Richardson P."/>
        </authorList>
    </citation>
    <scope>NUCLEOTIDE SEQUENCE [LARGE SCALE GENOMIC DNA]</scope>
    <source>
        <strain>NCIMB 400</strain>
    </source>
</reference>
<proteinExistence type="inferred from homology"/>
<keyword id="KW-0963">Cytoplasm</keyword>
<keyword id="KW-0489">Methyltransferase</keyword>
<keyword id="KW-1185">Reference proteome</keyword>
<keyword id="KW-0694">RNA-binding</keyword>
<keyword id="KW-0698">rRNA processing</keyword>
<keyword id="KW-0949">S-adenosyl-L-methionine</keyword>
<keyword id="KW-0808">Transferase</keyword>
<dbReference type="EC" id="2.1.1.182" evidence="1"/>
<dbReference type="EMBL" id="CP000447">
    <property type="protein sequence ID" value="ABI72916.1"/>
    <property type="molecule type" value="Genomic_DNA"/>
</dbReference>
<dbReference type="RefSeq" id="WP_011638522.1">
    <property type="nucleotide sequence ID" value="NC_008345.1"/>
</dbReference>
<dbReference type="SMR" id="Q07YJ8"/>
<dbReference type="STRING" id="318167.Sfri_3079"/>
<dbReference type="KEGG" id="sfr:Sfri_3079"/>
<dbReference type="eggNOG" id="COG0030">
    <property type="taxonomic scope" value="Bacteria"/>
</dbReference>
<dbReference type="HOGENOM" id="CLU_041220_0_1_6"/>
<dbReference type="OrthoDB" id="9814755at2"/>
<dbReference type="Proteomes" id="UP000000684">
    <property type="component" value="Chromosome"/>
</dbReference>
<dbReference type="GO" id="GO:0005829">
    <property type="term" value="C:cytosol"/>
    <property type="evidence" value="ECO:0007669"/>
    <property type="project" value="TreeGrafter"/>
</dbReference>
<dbReference type="GO" id="GO:0052908">
    <property type="term" value="F:16S rRNA (adenine(1518)-N(6)/adenine(1519)-N(6))-dimethyltransferase activity"/>
    <property type="evidence" value="ECO:0007669"/>
    <property type="project" value="UniProtKB-EC"/>
</dbReference>
<dbReference type="GO" id="GO:0003723">
    <property type="term" value="F:RNA binding"/>
    <property type="evidence" value="ECO:0007669"/>
    <property type="project" value="UniProtKB-KW"/>
</dbReference>
<dbReference type="FunFam" id="1.10.8.100:FF:000001">
    <property type="entry name" value="Ribosomal RNA small subunit methyltransferase A"/>
    <property type="match status" value="1"/>
</dbReference>
<dbReference type="FunFam" id="3.40.50.150:FF:000006">
    <property type="entry name" value="Ribosomal RNA small subunit methyltransferase A"/>
    <property type="match status" value="1"/>
</dbReference>
<dbReference type="Gene3D" id="1.10.8.100">
    <property type="entry name" value="Ribosomal RNA adenine dimethylase-like, domain 2"/>
    <property type="match status" value="1"/>
</dbReference>
<dbReference type="Gene3D" id="3.40.50.150">
    <property type="entry name" value="Vaccinia Virus protein VP39"/>
    <property type="match status" value="1"/>
</dbReference>
<dbReference type="HAMAP" id="MF_00607">
    <property type="entry name" value="16SrRNA_methyltr_A"/>
    <property type="match status" value="1"/>
</dbReference>
<dbReference type="InterPro" id="IPR001737">
    <property type="entry name" value="KsgA/Erm"/>
</dbReference>
<dbReference type="InterPro" id="IPR023165">
    <property type="entry name" value="rRNA_Ade_diMease-like_C"/>
</dbReference>
<dbReference type="InterPro" id="IPR020596">
    <property type="entry name" value="rRNA_Ade_Mease_Trfase_CS"/>
</dbReference>
<dbReference type="InterPro" id="IPR020598">
    <property type="entry name" value="rRNA_Ade_methylase_Trfase_N"/>
</dbReference>
<dbReference type="InterPro" id="IPR011530">
    <property type="entry name" value="rRNA_adenine_dimethylase"/>
</dbReference>
<dbReference type="InterPro" id="IPR029063">
    <property type="entry name" value="SAM-dependent_MTases_sf"/>
</dbReference>
<dbReference type="NCBIfam" id="TIGR00755">
    <property type="entry name" value="ksgA"/>
    <property type="match status" value="1"/>
</dbReference>
<dbReference type="PANTHER" id="PTHR11727">
    <property type="entry name" value="DIMETHYLADENOSINE TRANSFERASE"/>
    <property type="match status" value="1"/>
</dbReference>
<dbReference type="PANTHER" id="PTHR11727:SF7">
    <property type="entry name" value="DIMETHYLADENOSINE TRANSFERASE-RELATED"/>
    <property type="match status" value="1"/>
</dbReference>
<dbReference type="Pfam" id="PF00398">
    <property type="entry name" value="RrnaAD"/>
    <property type="match status" value="1"/>
</dbReference>
<dbReference type="SMART" id="SM00650">
    <property type="entry name" value="rADc"/>
    <property type="match status" value="1"/>
</dbReference>
<dbReference type="SUPFAM" id="SSF53335">
    <property type="entry name" value="S-adenosyl-L-methionine-dependent methyltransferases"/>
    <property type="match status" value="1"/>
</dbReference>
<dbReference type="PROSITE" id="PS01131">
    <property type="entry name" value="RRNA_A_DIMETH"/>
    <property type="match status" value="1"/>
</dbReference>
<dbReference type="PROSITE" id="PS51689">
    <property type="entry name" value="SAM_RNA_A_N6_MT"/>
    <property type="match status" value="1"/>
</dbReference>
<evidence type="ECO:0000255" key="1">
    <source>
        <dbReference type="HAMAP-Rule" id="MF_00607"/>
    </source>
</evidence>
<gene>
    <name evidence="1" type="primary">rsmA</name>
    <name evidence="1" type="synonym">ksgA</name>
    <name type="ordered locus">Sfri_3079</name>
</gene>
<protein>
    <recommendedName>
        <fullName evidence="1">Ribosomal RNA small subunit methyltransferase A</fullName>
        <ecNumber evidence="1">2.1.1.182</ecNumber>
    </recommendedName>
    <alternativeName>
        <fullName evidence="1">16S rRNA (adenine(1518)-N(6)/adenine(1519)-N(6))-dimethyltransferase</fullName>
    </alternativeName>
    <alternativeName>
        <fullName evidence="1">16S rRNA dimethyladenosine transferase</fullName>
    </alternativeName>
    <alternativeName>
        <fullName evidence="1">16S rRNA dimethylase</fullName>
    </alternativeName>
    <alternativeName>
        <fullName evidence="1">S-adenosylmethionine-6-N', N'-adenosyl(rRNA) dimethyltransferase</fullName>
    </alternativeName>
</protein>
<sequence length="268" mass="30185">MSNKVHLGHTARKRFGQNFLTDQGVISSIVGAIAPDNDHVMVEIGPGLGALTEPVADMIDNLTVVELDRDLVKRLQYHPVLKDKLTIHQGDALQFDFGQLQQPGKKMKVFGNLPYNISTPLMFHLFEFAEQIETMHFMLQKEVVLRLSASPGTKAYGRLTVMAQYYCQVVPVLEVPPTSFTPAPKVDSAVIRLLPFEVKPWPCKNVDVLRHLVTTAFNMRRKTLRNNLKTLLSDEDFAELQIDASLRPEQISVPQYVAMANMLCDKKD</sequence>
<name>RSMA_SHEFN</name>
<comment type="function">
    <text evidence="1">Specifically dimethylates two adjacent adenosines (A1518 and A1519) in the loop of a conserved hairpin near the 3'-end of 16S rRNA in the 30S particle. May play a critical role in biogenesis of 30S subunits.</text>
</comment>
<comment type="catalytic activity">
    <reaction evidence="1">
        <text>adenosine(1518)/adenosine(1519) in 16S rRNA + 4 S-adenosyl-L-methionine = N(6)-dimethyladenosine(1518)/N(6)-dimethyladenosine(1519) in 16S rRNA + 4 S-adenosyl-L-homocysteine + 4 H(+)</text>
        <dbReference type="Rhea" id="RHEA:19609"/>
        <dbReference type="Rhea" id="RHEA-COMP:10232"/>
        <dbReference type="Rhea" id="RHEA-COMP:10233"/>
        <dbReference type="ChEBI" id="CHEBI:15378"/>
        <dbReference type="ChEBI" id="CHEBI:57856"/>
        <dbReference type="ChEBI" id="CHEBI:59789"/>
        <dbReference type="ChEBI" id="CHEBI:74411"/>
        <dbReference type="ChEBI" id="CHEBI:74493"/>
        <dbReference type="EC" id="2.1.1.182"/>
    </reaction>
</comment>
<comment type="subcellular location">
    <subcellularLocation>
        <location evidence="1">Cytoplasm</location>
    </subcellularLocation>
</comment>
<comment type="similarity">
    <text evidence="1">Belongs to the class I-like SAM-binding methyltransferase superfamily. rRNA adenine N(6)-methyltransferase family. RsmA subfamily.</text>
</comment>
<feature type="chain" id="PRO_1000056669" description="Ribosomal RNA small subunit methyltransferase A">
    <location>
        <begin position="1"/>
        <end position="268"/>
    </location>
</feature>
<feature type="binding site" evidence="1">
    <location>
        <position position="18"/>
    </location>
    <ligand>
        <name>S-adenosyl-L-methionine</name>
        <dbReference type="ChEBI" id="CHEBI:59789"/>
    </ligand>
</feature>
<feature type="binding site" evidence="1">
    <location>
        <position position="20"/>
    </location>
    <ligand>
        <name>S-adenosyl-L-methionine</name>
        <dbReference type="ChEBI" id="CHEBI:59789"/>
    </ligand>
</feature>
<feature type="binding site" evidence="1">
    <location>
        <position position="45"/>
    </location>
    <ligand>
        <name>S-adenosyl-L-methionine</name>
        <dbReference type="ChEBI" id="CHEBI:59789"/>
    </ligand>
</feature>
<feature type="binding site" evidence="1">
    <location>
        <position position="66"/>
    </location>
    <ligand>
        <name>S-adenosyl-L-methionine</name>
        <dbReference type="ChEBI" id="CHEBI:59789"/>
    </ligand>
</feature>
<feature type="binding site" evidence="1">
    <location>
        <position position="91"/>
    </location>
    <ligand>
        <name>S-adenosyl-L-methionine</name>
        <dbReference type="ChEBI" id="CHEBI:59789"/>
    </ligand>
</feature>
<feature type="binding site" evidence="1">
    <location>
        <position position="112"/>
    </location>
    <ligand>
        <name>S-adenosyl-L-methionine</name>
        <dbReference type="ChEBI" id="CHEBI:59789"/>
    </ligand>
</feature>
<accession>Q07YJ8</accession>